<accession>P52209</accession>
<accession>A8K2Y9</accession>
<accession>B4DQJ8</accession>
<accession>Q9BWD8</accession>
<sequence>MAQADIALIGLAVMGQNLILNMNDHGFVVCAFNRTVSKVDDFLANEAKGTKVVGAQSLKEMVSKLKKPRRIILLVKAGQAVDDFIEKLVPLLDTGDIIIDGGNSEYRDTTRRCRDLKAKGILFVGSGVSGGEEGARYGPSLMPGGNKEAWPHIKTIFQGIAAKVGTGEPCCDWVGDEGAGHFVKMVHNGIEYGDMQLICEAYHLMKDVLGMAQDEMAQAFEDWNKTELDSFLIEITANILKFQDTDGKHLLPKIRDSAGQKGTGKWTAISALEYGVPVTLIGEAVFARCLSSLKDERIQASKKLKGPQKFQFDGDKKSFLEDIRKALYASKIISYAQGFMLLRQAATEFGWTLNYGGIALMWRGGCIIRSVFLGKIKDAFDRNPELQNLLLDDFFKSAVENCQDSWRRAVSTGVQAGIPMPCFTTALSFYDGYRHEMLPASLIQAQRDYFGAHTYELLAKPGQFIHTNWTGHGGTVSSSSYNA</sequence>
<evidence type="ECO:0000250" key="1"/>
<evidence type="ECO:0000250" key="2">
    <source>
        <dbReference type="UniProtKB" id="Q9DCD0"/>
    </source>
</evidence>
<evidence type="ECO:0000269" key="3">
    <source ref="9"/>
</evidence>
<evidence type="ECO:0000303" key="4">
    <source>
    </source>
</evidence>
<evidence type="ECO:0000305" key="5"/>
<evidence type="ECO:0007744" key="6">
    <source>
    </source>
</evidence>
<evidence type="ECO:0007829" key="7">
    <source>
        <dbReference type="PDB" id="2JKV"/>
    </source>
</evidence>
<evidence type="ECO:0007829" key="8">
    <source>
        <dbReference type="PDB" id="4GWG"/>
    </source>
</evidence>
<evidence type="ECO:0007829" key="9">
    <source>
        <dbReference type="PDB" id="5UQ9"/>
    </source>
</evidence>
<proteinExistence type="evidence at protein level"/>
<keyword id="KW-0002">3D-structure</keyword>
<keyword id="KW-0007">Acetylation</keyword>
<keyword id="KW-0025">Alternative splicing</keyword>
<keyword id="KW-0963">Cytoplasm</keyword>
<keyword id="KW-0311">Gluconate utilization</keyword>
<keyword id="KW-0521">NADP</keyword>
<keyword id="KW-0560">Oxidoreductase</keyword>
<keyword id="KW-0570">Pentose shunt</keyword>
<keyword id="KW-0597">Phosphoprotein</keyword>
<keyword id="KW-1267">Proteomics identification</keyword>
<keyword id="KW-1185">Reference proteome</keyword>
<dbReference type="EC" id="1.1.1.44"/>
<dbReference type="EMBL" id="U30255">
    <property type="protein sequence ID" value="AAA75302.1"/>
    <property type="molecule type" value="mRNA"/>
</dbReference>
<dbReference type="EMBL" id="AK290404">
    <property type="protein sequence ID" value="BAF83093.1"/>
    <property type="molecule type" value="mRNA"/>
</dbReference>
<dbReference type="EMBL" id="AK298830">
    <property type="protein sequence ID" value="BAG60960.1"/>
    <property type="molecule type" value="mRNA"/>
</dbReference>
<dbReference type="EMBL" id="AL139424">
    <property type="status" value="NOT_ANNOTATED_CDS"/>
    <property type="molecule type" value="Genomic_DNA"/>
</dbReference>
<dbReference type="EMBL" id="CH471130">
    <property type="protein sequence ID" value="EAW71648.1"/>
    <property type="molecule type" value="Genomic_DNA"/>
</dbReference>
<dbReference type="EMBL" id="BC000368">
    <property type="protein sequence ID" value="AAH00368.1"/>
    <property type="molecule type" value="mRNA"/>
</dbReference>
<dbReference type="CCDS" id="CCDS113.1">
    <molecule id="P52209-1"/>
</dbReference>
<dbReference type="PIR" id="G01922">
    <property type="entry name" value="G01922"/>
</dbReference>
<dbReference type="RefSeq" id="NP_001291380.1">
    <property type="nucleotide sequence ID" value="NM_001304451.1"/>
</dbReference>
<dbReference type="RefSeq" id="NP_001291381.1">
    <molecule id="P52209-2"/>
    <property type="nucleotide sequence ID" value="NM_001304452.2"/>
</dbReference>
<dbReference type="RefSeq" id="NP_002622.2">
    <molecule id="P52209-1"/>
    <property type="nucleotide sequence ID" value="NM_002631.3"/>
</dbReference>
<dbReference type="PDB" id="2JKV">
    <property type="method" value="X-ray"/>
    <property type="resolution" value="2.53 A"/>
    <property type="chains" value="A/B/C/D/E/F=1-483"/>
</dbReference>
<dbReference type="PDB" id="4GWG">
    <property type="method" value="X-ray"/>
    <property type="resolution" value="1.39 A"/>
    <property type="chains" value="A=2-483"/>
</dbReference>
<dbReference type="PDB" id="4GWK">
    <property type="method" value="X-ray"/>
    <property type="resolution" value="1.53 A"/>
    <property type="chains" value="A=2-483"/>
</dbReference>
<dbReference type="PDB" id="5UQ9">
    <property type="method" value="X-ray"/>
    <property type="resolution" value="3.00 A"/>
    <property type="chains" value="A/B/C/D/E/F/G/H=1-483"/>
</dbReference>
<dbReference type="PDBsum" id="2JKV"/>
<dbReference type="PDBsum" id="4GWG"/>
<dbReference type="PDBsum" id="4GWK"/>
<dbReference type="PDBsum" id="5UQ9"/>
<dbReference type="SMR" id="P52209"/>
<dbReference type="BioGRID" id="111247">
    <property type="interactions" value="194"/>
</dbReference>
<dbReference type="FunCoup" id="P52209">
    <property type="interactions" value="2109"/>
</dbReference>
<dbReference type="IntAct" id="P52209">
    <property type="interactions" value="49"/>
</dbReference>
<dbReference type="MINT" id="P52209"/>
<dbReference type="STRING" id="9606.ENSP00000270776"/>
<dbReference type="BindingDB" id="P52209"/>
<dbReference type="ChEMBL" id="CHEMBL3404"/>
<dbReference type="DrugBank" id="DB03108">
    <property type="generic name" value="4-phospho-D-erythronic acid"/>
</dbReference>
<dbReference type="DrugBank" id="DB02076">
    <property type="generic name" value="6-phospho-D-gluconic acid"/>
</dbReference>
<dbReference type="DrugBank" id="DB00851">
    <property type="generic name" value="Dacarbazine"/>
</dbReference>
<dbReference type="DrugBank" id="DB00695">
    <property type="generic name" value="Furosemide"/>
</dbReference>
<dbReference type="DrugBank" id="DB00789">
    <property type="generic name" value="Gadopentetic acid"/>
</dbReference>
<dbReference type="DrugBank" id="DB00920">
    <property type="generic name" value="Ketotifen"/>
</dbReference>
<dbReference type="DrugBank" id="DB00814">
    <property type="generic name" value="Meloxicam"/>
</dbReference>
<dbReference type="DrugBank" id="DB00563">
    <property type="generic name" value="Methotrexate"/>
</dbReference>
<dbReference type="DrugBank" id="DB03962">
    <property type="generic name" value="Nicotinamide 8-bromo-adenine dinucleotide phosphate"/>
</dbReference>
<dbReference type="DrugBank" id="DB18252">
    <property type="generic name" value="Pralmorelin"/>
</dbReference>
<dbReference type="DrugBank" id="DB00867">
    <property type="generic name" value="Ritodrine"/>
</dbReference>
<dbReference type="GlyGen" id="P52209">
    <property type="glycosylation" value="1 site, 1 O-linked glycan (1 site)"/>
</dbReference>
<dbReference type="iPTMnet" id="P52209"/>
<dbReference type="MetOSite" id="P52209"/>
<dbReference type="PhosphoSitePlus" id="P52209"/>
<dbReference type="SwissPalm" id="P52209"/>
<dbReference type="BioMuta" id="PGD"/>
<dbReference type="DMDM" id="20981679"/>
<dbReference type="CPTAC" id="CPTAC-2711"/>
<dbReference type="CPTAC" id="CPTAC-560"/>
<dbReference type="CPTAC" id="CPTAC-561"/>
<dbReference type="jPOST" id="P52209"/>
<dbReference type="MassIVE" id="P52209"/>
<dbReference type="PaxDb" id="9606-ENSP00000270776"/>
<dbReference type="PeptideAtlas" id="P52209"/>
<dbReference type="PRIDE" id="P52209"/>
<dbReference type="ProteomicsDB" id="4884"/>
<dbReference type="ProteomicsDB" id="56472">
    <molecule id="P52209-1"/>
</dbReference>
<dbReference type="Pumba" id="P52209"/>
<dbReference type="TopDownProteomics" id="P52209-1">
    <molecule id="P52209-1"/>
</dbReference>
<dbReference type="Antibodypedia" id="27894">
    <property type="antibodies" value="350 antibodies from 34 providers"/>
</dbReference>
<dbReference type="DNASU" id="5226"/>
<dbReference type="Ensembl" id="ENST00000270776.13">
    <molecule id="P52209-1"/>
    <property type="protein sequence ID" value="ENSP00000270776.8"/>
    <property type="gene ID" value="ENSG00000142657.21"/>
</dbReference>
<dbReference type="GeneID" id="5226"/>
<dbReference type="KEGG" id="hsa:5226"/>
<dbReference type="MANE-Select" id="ENST00000270776.13">
    <property type="protein sequence ID" value="ENSP00000270776.8"/>
    <property type="RefSeq nucleotide sequence ID" value="NM_002631.4"/>
    <property type="RefSeq protein sequence ID" value="NP_002622.2"/>
</dbReference>
<dbReference type="UCSC" id="uc001arc.4">
    <molecule id="P52209-1"/>
    <property type="organism name" value="human"/>
</dbReference>
<dbReference type="AGR" id="HGNC:8891"/>
<dbReference type="CTD" id="5226"/>
<dbReference type="DisGeNET" id="5226"/>
<dbReference type="GeneCards" id="PGD"/>
<dbReference type="HGNC" id="HGNC:8891">
    <property type="gene designation" value="PGD"/>
</dbReference>
<dbReference type="HPA" id="ENSG00000142657">
    <property type="expression patterns" value="Tissue enhanced (bone marrow, esophagus)"/>
</dbReference>
<dbReference type="MIM" id="172200">
    <property type="type" value="gene"/>
</dbReference>
<dbReference type="neXtProt" id="NX_P52209"/>
<dbReference type="OpenTargets" id="ENSG00000142657"/>
<dbReference type="PharmGKB" id="PA33229"/>
<dbReference type="VEuPathDB" id="HostDB:ENSG00000142657"/>
<dbReference type="eggNOG" id="KOG2653">
    <property type="taxonomic scope" value="Eukaryota"/>
</dbReference>
<dbReference type="GeneTree" id="ENSGT00390000009023"/>
<dbReference type="HOGENOM" id="CLU_024540_4_2_1"/>
<dbReference type="InParanoid" id="P52209"/>
<dbReference type="OMA" id="CVTHVGP"/>
<dbReference type="OrthoDB" id="434986at2759"/>
<dbReference type="PAN-GO" id="P52209">
    <property type="GO annotations" value="5 GO annotations based on evolutionary models"/>
</dbReference>
<dbReference type="PhylomeDB" id="P52209"/>
<dbReference type="TreeFam" id="TF300386"/>
<dbReference type="BioCyc" id="MetaCyc:HS06949-MONOMER"/>
<dbReference type="BRENDA" id="1.1.1.44">
    <property type="organism ID" value="2681"/>
</dbReference>
<dbReference type="PathwayCommons" id="P52209"/>
<dbReference type="Reactome" id="R-HSA-71336">
    <property type="pathway name" value="Pentose phosphate pathway"/>
</dbReference>
<dbReference type="Reactome" id="R-HSA-9818028">
    <property type="pathway name" value="NFE2L2 regulates pentose phosphate pathway genes"/>
</dbReference>
<dbReference type="SABIO-RK" id="P52209"/>
<dbReference type="SignaLink" id="P52209"/>
<dbReference type="SIGNOR" id="P52209"/>
<dbReference type="UniPathway" id="UPA00115">
    <property type="reaction ID" value="UER00410"/>
</dbReference>
<dbReference type="BioGRID-ORCS" id="5226">
    <property type="hits" value="675 hits in 1175 CRISPR screens"/>
</dbReference>
<dbReference type="CD-CODE" id="8C2F96ED">
    <property type="entry name" value="Centrosome"/>
</dbReference>
<dbReference type="CD-CODE" id="91857CE7">
    <property type="entry name" value="Nucleolus"/>
</dbReference>
<dbReference type="CD-CODE" id="FB4E32DD">
    <property type="entry name" value="Presynaptic clusters and postsynaptic densities"/>
</dbReference>
<dbReference type="ChiTaRS" id="PGD">
    <property type="organism name" value="human"/>
</dbReference>
<dbReference type="EvolutionaryTrace" id="P52209"/>
<dbReference type="GenomeRNAi" id="5226"/>
<dbReference type="Pharos" id="P52209">
    <property type="development level" value="Tchem"/>
</dbReference>
<dbReference type="PRO" id="PR:P52209"/>
<dbReference type="Proteomes" id="UP000005640">
    <property type="component" value="Chromosome 1"/>
</dbReference>
<dbReference type="RNAct" id="P52209">
    <property type="molecule type" value="protein"/>
</dbReference>
<dbReference type="Bgee" id="ENSG00000142657">
    <property type="expression patterns" value="Expressed in lower esophagus mucosa and 192 other cell types or tissues"/>
</dbReference>
<dbReference type="ExpressionAtlas" id="P52209">
    <property type="expression patterns" value="baseline and differential"/>
</dbReference>
<dbReference type="GO" id="GO:0005829">
    <property type="term" value="C:cytosol"/>
    <property type="evidence" value="ECO:0000318"/>
    <property type="project" value="GO_Central"/>
</dbReference>
<dbReference type="GO" id="GO:0070062">
    <property type="term" value="C:extracellular exosome"/>
    <property type="evidence" value="ECO:0007005"/>
    <property type="project" value="UniProtKB"/>
</dbReference>
<dbReference type="GO" id="GO:0005634">
    <property type="term" value="C:nucleus"/>
    <property type="evidence" value="ECO:0007005"/>
    <property type="project" value="UniProtKB"/>
</dbReference>
<dbReference type="GO" id="GO:0030246">
    <property type="term" value="F:carbohydrate binding"/>
    <property type="evidence" value="ECO:0007669"/>
    <property type="project" value="Ensembl"/>
</dbReference>
<dbReference type="GO" id="GO:0031406">
    <property type="term" value="F:carboxylic acid binding"/>
    <property type="evidence" value="ECO:0007669"/>
    <property type="project" value="Ensembl"/>
</dbReference>
<dbReference type="GO" id="GO:0050661">
    <property type="term" value="F:NADP binding"/>
    <property type="evidence" value="ECO:0000318"/>
    <property type="project" value="GO_Central"/>
</dbReference>
<dbReference type="GO" id="GO:0004616">
    <property type="term" value="F:phosphogluconate dehydrogenase (decarboxylating) activity"/>
    <property type="evidence" value="ECO:0000250"/>
    <property type="project" value="UniProtKB"/>
</dbReference>
<dbReference type="GO" id="GO:0019521">
    <property type="term" value="P:D-gluconate metabolic process"/>
    <property type="evidence" value="ECO:0007669"/>
    <property type="project" value="UniProtKB-KW"/>
</dbReference>
<dbReference type="GO" id="GO:0019322">
    <property type="term" value="P:pentose biosynthetic process"/>
    <property type="evidence" value="ECO:0007669"/>
    <property type="project" value="Ensembl"/>
</dbReference>
<dbReference type="GO" id="GO:0006098">
    <property type="term" value="P:pentose-phosphate shunt"/>
    <property type="evidence" value="ECO:0000250"/>
    <property type="project" value="UniProtKB"/>
</dbReference>
<dbReference type="GO" id="GO:0009051">
    <property type="term" value="P:pentose-phosphate shunt, oxidative branch"/>
    <property type="evidence" value="ECO:0000314"/>
    <property type="project" value="UniProtKB"/>
</dbReference>
<dbReference type="FunFam" id="1.10.1040.10:FF:000002">
    <property type="entry name" value="6-phosphogluconate dehydrogenase, decarboxylating"/>
    <property type="match status" value="1"/>
</dbReference>
<dbReference type="FunFam" id="1.20.5.320:FF:000002">
    <property type="entry name" value="6-phosphogluconate dehydrogenase, decarboxylating"/>
    <property type="match status" value="1"/>
</dbReference>
<dbReference type="FunFam" id="3.40.50.720:FF:000007">
    <property type="entry name" value="6-phosphogluconate dehydrogenase, decarboxylating"/>
    <property type="match status" value="1"/>
</dbReference>
<dbReference type="Gene3D" id="1.20.5.320">
    <property type="entry name" value="6-Phosphogluconate Dehydrogenase, domain 3"/>
    <property type="match status" value="1"/>
</dbReference>
<dbReference type="Gene3D" id="1.10.1040.10">
    <property type="entry name" value="N-(1-d-carboxylethyl)-l-norvaline Dehydrogenase, domain 2"/>
    <property type="match status" value="1"/>
</dbReference>
<dbReference type="Gene3D" id="3.40.50.720">
    <property type="entry name" value="NAD(P)-binding Rossmann-like Domain"/>
    <property type="match status" value="1"/>
</dbReference>
<dbReference type="InterPro" id="IPR008927">
    <property type="entry name" value="6-PGluconate_DH-like_C_sf"/>
</dbReference>
<dbReference type="InterPro" id="IPR013328">
    <property type="entry name" value="6PGD_dom2"/>
</dbReference>
<dbReference type="InterPro" id="IPR006114">
    <property type="entry name" value="6PGDH_C"/>
</dbReference>
<dbReference type="InterPro" id="IPR006113">
    <property type="entry name" value="6PGDH_Gnd/GntZ"/>
</dbReference>
<dbReference type="InterPro" id="IPR006115">
    <property type="entry name" value="6PGDH_NADP-bd"/>
</dbReference>
<dbReference type="InterPro" id="IPR006184">
    <property type="entry name" value="6PGdom_BS"/>
</dbReference>
<dbReference type="InterPro" id="IPR036291">
    <property type="entry name" value="NAD(P)-bd_dom_sf"/>
</dbReference>
<dbReference type="InterPro" id="IPR006183">
    <property type="entry name" value="Pgluconate_DH"/>
</dbReference>
<dbReference type="NCBIfam" id="TIGR00873">
    <property type="entry name" value="gnd"/>
    <property type="match status" value="1"/>
</dbReference>
<dbReference type="NCBIfam" id="NF006765">
    <property type="entry name" value="PRK09287.1"/>
    <property type="match status" value="1"/>
</dbReference>
<dbReference type="PANTHER" id="PTHR11811">
    <property type="entry name" value="6-PHOSPHOGLUCONATE DEHYDROGENASE"/>
    <property type="match status" value="1"/>
</dbReference>
<dbReference type="Pfam" id="PF00393">
    <property type="entry name" value="6PGD"/>
    <property type="match status" value="1"/>
</dbReference>
<dbReference type="Pfam" id="PF03446">
    <property type="entry name" value="NAD_binding_2"/>
    <property type="match status" value="1"/>
</dbReference>
<dbReference type="PIRSF" id="PIRSF000109">
    <property type="entry name" value="6PGD"/>
    <property type="match status" value="1"/>
</dbReference>
<dbReference type="PRINTS" id="PR00076">
    <property type="entry name" value="6PGDHDRGNASE"/>
</dbReference>
<dbReference type="SMART" id="SM01350">
    <property type="entry name" value="6PGD"/>
    <property type="match status" value="1"/>
</dbReference>
<dbReference type="SUPFAM" id="SSF48179">
    <property type="entry name" value="6-phosphogluconate dehydrogenase C-terminal domain-like"/>
    <property type="match status" value="1"/>
</dbReference>
<dbReference type="SUPFAM" id="SSF51735">
    <property type="entry name" value="NAD(P)-binding Rossmann-fold domains"/>
    <property type="match status" value="1"/>
</dbReference>
<dbReference type="PROSITE" id="PS00461">
    <property type="entry name" value="6PGD"/>
    <property type="match status" value="1"/>
</dbReference>
<feature type="chain" id="PRO_0000090063" description="6-phosphogluconate dehydrogenase, decarboxylating">
    <location>
        <begin position="1"/>
        <end position="483"/>
    </location>
</feature>
<feature type="active site" description="Proton acceptor" evidence="1">
    <location>
        <position position="184"/>
    </location>
</feature>
<feature type="active site" description="Proton donor" evidence="1">
    <location>
        <position position="191"/>
    </location>
</feature>
<feature type="binding site" description="in other chain" evidence="3">
    <location>
        <begin position="10"/>
        <end position="15"/>
    </location>
    <ligand>
        <name>NADP(+)</name>
        <dbReference type="ChEBI" id="CHEBI:58349"/>
        <note>ligand shared between dimeric partners</note>
    </ligand>
</feature>
<feature type="binding site" description="in other chain" evidence="3">
    <location>
        <begin position="33"/>
        <end position="35"/>
    </location>
    <ligand>
        <name>NADP(+)</name>
        <dbReference type="ChEBI" id="CHEBI:58349"/>
        <note>ligand shared between dimeric partners</note>
    </ligand>
</feature>
<feature type="binding site" description="in other chain" evidence="3">
    <location>
        <begin position="75"/>
        <end position="77"/>
    </location>
    <ligand>
        <name>NADP(+)</name>
        <dbReference type="ChEBI" id="CHEBI:58349"/>
        <note>ligand shared between dimeric partners</note>
    </ligand>
</feature>
<feature type="binding site" description="in other chain" evidence="3">
    <location>
        <position position="103"/>
    </location>
    <ligand>
        <name>NADP(+)</name>
        <dbReference type="ChEBI" id="CHEBI:58349"/>
        <note>ligand shared between dimeric partners</note>
    </ligand>
</feature>
<feature type="binding site" description="in other chain" evidence="1">
    <location>
        <position position="103"/>
    </location>
    <ligand>
        <name>substrate</name>
        <note>ligand shared between dimeric partners</note>
    </ligand>
</feature>
<feature type="binding site" description="in other chain" evidence="1">
    <location>
        <begin position="129"/>
        <end position="131"/>
    </location>
    <ligand>
        <name>substrate</name>
        <note>ligand shared between dimeric partners</note>
    </ligand>
</feature>
<feature type="binding site" description="in other chain" evidence="1">
    <location>
        <begin position="187"/>
        <end position="188"/>
    </location>
    <ligand>
        <name>substrate</name>
        <note>ligand shared between dimeric partners</note>
    </ligand>
</feature>
<feature type="binding site" description="in other chain" evidence="1">
    <location>
        <position position="192"/>
    </location>
    <ligand>
        <name>substrate</name>
        <note>ligand shared between dimeric partners</note>
    </ligand>
</feature>
<feature type="binding site" description="in other chain" evidence="1">
    <location>
        <position position="261"/>
    </location>
    <ligand>
        <name>substrate</name>
        <note>ligand shared between dimeric partners</note>
    </ligand>
</feature>
<feature type="binding site" description="in other chain" evidence="1">
    <location>
        <position position="288"/>
    </location>
    <ligand>
        <name>substrate</name>
        <note>ligand shared between dimeric partners</note>
    </ligand>
</feature>
<feature type="binding site" evidence="1">
    <location>
        <position position="447"/>
    </location>
    <ligand>
        <name>substrate</name>
        <note>ligand shared between dimeric partners</note>
    </ligand>
</feature>
<feature type="binding site" evidence="1">
    <location>
        <position position="453"/>
    </location>
    <ligand>
        <name>substrate</name>
        <note>ligand shared between dimeric partners</note>
    </ligand>
</feature>
<feature type="binding site" evidence="3">
    <location>
        <begin position="478"/>
        <end position="481"/>
    </location>
    <ligand>
        <name>NADP(+)</name>
        <dbReference type="ChEBI" id="CHEBI:58349"/>
        <note>ligand shared between dimeric partners</note>
    </ligand>
</feature>
<feature type="modified residue" description="N6-acetyllysine" evidence="2">
    <location>
        <position position="38"/>
    </location>
</feature>
<feature type="modified residue" description="Phosphoserine" evidence="2">
    <location>
        <position position="57"/>
    </location>
</feature>
<feature type="modified residue" description="N6-acetyllysine" evidence="6">
    <location>
        <position position="59"/>
    </location>
</feature>
<feature type="modified residue" description="Phosphoserine" evidence="2">
    <location>
        <position position="129"/>
    </location>
</feature>
<feature type="modified residue" description="N6-acetyllysine" evidence="6">
    <location>
        <position position="309"/>
    </location>
</feature>
<feature type="splice variant" id="VSP_055767" description="In isoform 2." evidence="4">
    <location>
        <begin position="1"/>
        <end position="13"/>
    </location>
</feature>
<feature type="sequence variant" id="VAR_048104" description="In dbSNP:rs11547610.">
    <original>A</original>
    <variation>S</variation>
    <location>
        <position position="268"/>
    </location>
</feature>
<feature type="sequence conflict" description="In Ref. 1; AAA75302." evidence="5" ref="1">
    <original>A</original>
    <variation>G</variation>
    <location>
        <position position="118"/>
    </location>
</feature>
<feature type="sequence conflict" description="In Ref. 1; AAA75302." evidence="5" ref="1">
    <original>A</original>
    <variation>P</variation>
    <location>
        <position position="135"/>
    </location>
</feature>
<feature type="strand" evidence="8">
    <location>
        <begin position="4"/>
        <end position="9"/>
    </location>
</feature>
<feature type="helix" evidence="8">
    <location>
        <begin position="13"/>
        <end position="24"/>
    </location>
</feature>
<feature type="strand" evidence="8">
    <location>
        <begin position="29"/>
        <end position="32"/>
    </location>
</feature>
<feature type="helix" evidence="8">
    <location>
        <begin position="37"/>
        <end position="44"/>
    </location>
</feature>
<feature type="turn" evidence="8">
    <location>
        <begin position="45"/>
        <end position="49"/>
    </location>
</feature>
<feature type="helix" evidence="8">
    <location>
        <begin position="58"/>
        <end position="63"/>
    </location>
</feature>
<feature type="strand" evidence="8">
    <location>
        <begin position="70"/>
        <end position="73"/>
    </location>
</feature>
<feature type="helix" evidence="8">
    <location>
        <begin position="79"/>
        <end position="88"/>
    </location>
</feature>
<feature type="helix" evidence="8">
    <location>
        <begin position="89"/>
        <end position="91"/>
    </location>
</feature>
<feature type="strand" evidence="8">
    <location>
        <begin position="97"/>
        <end position="100"/>
    </location>
</feature>
<feature type="helix" evidence="8">
    <location>
        <begin position="106"/>
        <end position="118"/>
    </location>
</feature>
<feature type="strand" evidence="8">
    <location>
        <begin position="122"/>
        <end position="130"/>
    </location>
</feature>
<feature type="helix" evidence="8">
    <location>
        <begin position="131"/>
        <end position="137"/>
    </location>
</feature>
<feature type="strand" evidence="8">
    <location>
        <begin position="140"/>
        <end position="145"/>
    </location>
</feature>
<feature type="helix" evidence="8">
    <location>
        <begin position="147"/>
        <end position="149"/>
    </location>
</feature>
<feature type="helix" evidence="8">
    <location>
        <begin position="150"/>
        <end position="160"/>
    </location>
</feature>
<feature type="turn" evidence="7">
    <location>
        <begin position="165"/>
        <end position="167"/>
    </location>
</feature>
<feature type="strand" evidence="8">
    <location>
        <begin position="169"/>
        <end position="171"/>
    </location>
</feature>
<feature type="strand" evidence="9">
    <location>
        <begin position="175"/>
        <end position="178"/>
    </location>
</feature>
<feature type="helix" evidence="8">
    <location>
        <begin position="179"/>
        <end position="207"/>
    </location>
</feature>
<feature type="helix" evidence="8">
    <location>
        <begin position="213"/>
        <end position="223"/>
    </location>
</feature>
<feature type="turn" evidence="8">
    <location>
        <begin position="224"/>
        <end position="228"/>
    </location>
</feature>
<feature type="helix" evidence="8">
    <location>
        <begin position="231"/>
        <end position="241"/>
    </location>
</feature>
<feature type="strand" evidence="8">
    <location>
        <begin position="247"/>
        <end position="250"/>
    </location>
</feature>
<feature type="helix" evidence="8">
    <location>
        <begin position="251"/>
        <end position="253"/>
    </location>
</feature>
<feature type="helix" evidence="8">
    <location>
        <begin position="265"/>
        <end position="274"/>
    </location>
</feature>
<feature type="helix" evidence="8">
    <location>
        <begin position="279"/>
        <end position="292"/>
    </location>
</feature>
<feature type="helix" evidence="8">
    <location>
        <begin position="294"/>
        <end position="301"/>
    </location>
</feature>
<feature type="helix" evidence="8">
    <location>
        <begin position="316"/>
        <end position="349"/>
    </location>
</feature>
<feature type="helix" evidence="8">
    <location>
        <begin position="355"/>
        <end position="361"/>
    </location>
</feature>
<feature type="strand" evidence="9">
    <location>
        <begin position="363"/>
        <end position="368"/>
    </location>
</feature>
<feature type="helix" evidence="8">
    <location>
        <begin position="371"/>
        <end position="382"/>
    </location>
</feature>
<feature type="helix" evidence="8">
    <location>
        <begin position="389"/>
        <end position="391"/>
    </location>
</feature>
<feature type="helix" evidence="8">
    <location>
        <begin position="393"/>
        <end position="416"/>
    </location>
</feature>
<feature type="helix" evidence="8">
    <location>
        <begin position="421"/>
        <end position="433"/>
    </location>
</feature>
<feature type="helix" evidence="8">
    <location>
        <begin position="440"/>
        <end position="451"/>
    </location>
</feature>
<feature type="strand" evidence="8">
    <location>
        <begin position="455"/>
        <end position="457"/>
    </location>
</feature>
<feature type="strand" evidence="8">
    <location>
        <begin position="460"/>
        <end position="465"/>
    </location>
</feature>
<comment type="function">
    <text evidence="1">Catalyzes the oxidative decarboxylation of 6-phosphogluconate to ribulose 5-phosphate and CO(2), with concomitant reduction of NADP to NADPH.</text>
</comment>
<comment type="catalytic activity">
    <reaction>
        <text>6-phospho-D-gluconate + NADP(+) = D-ribulose 5-phosphate + CO2 + NADPH</text>
        <dbReference type="Rhea" id="RHEA:10116"/>
        <dbReference type="ChEBI" id="CHEBI:16526"/>
        <dbReference type="ChEBI" id="CHEBI:57783"/>
        <dbReference type="ChEBI" id="CHEBI:58121"/>
        <dbReference type="ChEBI" id="CHEBI:58349"/>
        <dbReference type="ChEBI" id="CHEBI:58759"/>
        <dbReference type="EC" id="1.1.1.44"/>
    </reaction>
</comment>
<comment type="pathway">
    <text>Carbohydrate degradation; pentose phosphate pathway; D-ribulose 5-phosphate from D-glucose 6-phosphate (oxidative stage): step 3/3.</text>
</comment>
<comment type="subunit">
    <text evidence="3">Homodimer.</text>
</comment>
<comment type="subcellular location">
    <subcellularLocation>
        <location evidence="1">Cytoplasm</location>
    </subcellularLocation>
</comment>
<comment type="alternative products">
    <event type="alternative splicing"/>
    <isoform>
        <id>P52209-1</id>
        <name>1</name>
        <sequence type="displayed"/>
    </isoform>
    <isoform>
        <id>P52209-2</id>
        <name>2</name>
        <sequence type="described" ref="VSP_055767"/>
    </isoform>
</comment>
<comment type="similarity">
    <text evidence="5">Belongs to the 6-phosphogluconate dehydrogenase family.</text>
</comment>
<reference key="1">
    <citation type="journal article" date="1996" name="Biochem. Genet.">
        <title>Identification of a cDNA encoding 6-phosphogluconate dehydrogenase from a human heart cDNA library.</title>
        <authorList>
            <person name="Tsui S.K.W."/>
            <person name="Chan J.Y."/>
            <person name="Waye M.M.Y."/>
            <person name="Fung K.-P."/>
            <person name="Lee C.-Y."/>
        </authorList>
    </citation>
    <scope>NUCLEOTIDE SEQUENCE [MRNA] (ISOFORM 1)</scope>
    <source>
        <tissue>Heart</tissue>
    </source>
</reference>
<reference key="2">
    <citation type="journal article" date="2004" name="Nat. Genet.">
        <title>Complete sequencing and characterization of 21,243 full-length human cDNAs.</title>
        <authorList>
            <person name="Ota T."/>
            <person name="Suzuki Y."/>
            <person name="Nishikawa T."/>
            <person name="Otsuki T."/>
            <person name="Sugiyama T."/>
            <person name="Irie R."/>
            <person name="Wakamatsu A."/>
            <person name="Hayashi K."/>
            <person name="Sato H."/>
            <person name="Nagai K."/>
            <person name="Kimura K."/>
            <person name="Makita H."/>
            <person name="Sekine M."/>
            <person name="Obayashi M."/>
            <person name="Nishi T."/>
            <person name="Shibahara T."/>
            <person name="Tanaka T."/>
            <person name="Ishii S."/>
            <person name="Yamamoto J."/>
            <person name="Saito K."/>
            <person name="Kawai Y."/>
            <person name="Isono Y."/>
            <person name="Nakamura Y."/>
            <person name="Nagahari K."/>
            <person name="Murakami K."/>
            <person name="Yasuda T."/>
            <person name="Iwayanagi T."/>
            <person name="Wagatsuma M."/>
            <person name="Shiratori A."/>
            <person name="Sudo H."/>
            <person name="Hosoiri T."/>
            <person name="Kaku Y."/>
            <person name="Kodaira H."/>
            <person name="Kondo H."/>
            <person name="Sugawara M."/>
            <person name="Takahashi M."/>
            <person name="Kanda K."/>
            <person name="Yokoi T."/>
            <person name="Furuya T."/>
            <person name="Kikkawa E."/>
            <person name="Omura Y."/>
            <person name="Abe K."/>
            <person name="Kamihara K."/>
            <person name="Katsuta N."/>
            <person name="Sato K."/>
            <person name="Tanikawa M."/>
            <person name="Yamazaki M."/>
            <person name="Ninomiya K."/>
            <person name="Ishibashi T."/>
            <person name="Yamashita H."/>
            <person name="Murakawa K."/>
            <person name="Fujimori K."/>
            <person name="Tanai H."/>
            <person name="Kimata M."/>
            <person name="Watanabe M."/>
            <person name="Hiraoka S."/>
            <person name="Chiba Y."/>
            <person name="Ishida S."/>
            <person name="Ono Y."/>
            <person name="Takiguchi S."/>
            <person name="Watanabe S."/>
            <person name="Yosida M."/>
            <person name="Hotuta T."/>
            <person name="Kusano J."/>
            <person name="Kanehori K."/>
            <person name="Takahashi-Fujii A."/>
            <person name="Hara H."/>
            <person name="Tanase T.-O."/>
            <person name="Nomura Y."/>
            <person name="Togiya S."/>
            <person name="Komai F."/>
            <person name="Hara R."/>
            <person name="Takeuchi K."/>
            <person name="Arita M."/>
            <person name="Imose N."/>
            <person name="Musashino K."/>
            <person name="Yuuki H."/>
            <person name="Oshima A."/>
            <person name="Sasaki N."/>
            <person name="Aotsuka S."/>
            <person name="Yoshikawa Y."/>
            <person name="Matsunawa H."/>
            <person name="Ichihara T."/>
            <person name="Shiohata N."/>
            <person name="Sano S."/>
            <person name="Moriya S."/>
            <person name="Momiyama H."/>
            <person name="Satoh N."/>
            <person name="Takami S."/>
            <person name="Terashima Y."/>
            <person name="Suzuki O."/>
            <person name="Nakagawa S."/>
            <person name="Senoh A."/>
            <person name="Mizoguchi H."/>
            <person name="Goto Y."/>
            <person name="Shimizu F."/>
            <person name="Wakebe H."/>
            <person name="Hishigaki H."/>
            <person name="Watanabe T."/>
            <person name="Sugiyama A."/>
            <person name="Takemoto M."/>
            <person name="Kawakami B."/>
            <person name="Yamazaki M."/>
            <person name="Watanabe K."/>
            <person name="Kumagai A."/>
            <person name="Itakura S."/>
            <person name="Fukuzumi Y."/>
            <person name="Fujimori Y."/>
            <person name="Komiyama M."/>
            <person name="Tashiro H."/>
            <person name="Tanigami A."/>
            <person name="Fujiwara T."/>
            <person name="Ono T."/>
            <person name="Yamada K."/>
            <person name="Fujii Y."/>
            <person name="Ozaki K."/>
            <person name="Hirao M."/>
            <person name="Ohmori Y."/>
            <person name="Kawabata A."/>
            <person name="Hikiji T."/>
            <person name="Kobatake N."/>
            <person name="Inagaki H."/>
            <person name="Ikema Y."/>
            <person name="Okamoto S."/>
            <person name="Okitani R."/>
            <person name="Kawakami T."/>
            <person name="Noguchi S."/>
            <person name="Itoh T."/>
            <person name="Shigeta K."/>
            <person name="Senba T."/>
            <person name="Matsumura K."/>
            <person name="Nakajima Y."/>
            <person name="Mizuno T."/>
            <person name="Morinaga M."/>
            <person name="Sasaki M."/>
            <person name="Togashi T."/>
            <person name="Oyama M."/>
            <person name="Hata H."/>
            <person name="Watanabe M."/>
            <person name="Komatsu T."/>
            <person name="Mizushima-Sugano J."/>
            <person name="Satoh T."/>
            <person name="Shirai Y."/>
            <person name="Takahashi Y."/>
            <person name="Nakagawa K."/>
            <person name="Okumura K."/>
            <person name="Nagase T."/>
            <person name="Nomura N."/>
            <person name="Kikuchi H."/>
            <person name="Masuho Y."/>
            <person name="Yamashita R."/>
            <person name="Nakai K."/>
            <person name="Yada T."/>
            <person name="Nakamura Y."/>
            <person name="Ohara O."/>
            <person name="Isogai T."/>
            <person name="Sugano S."/>
        </authorList>
    </citation>
    <scope>NUCLEOTIDE SEQUENCE [LARGE SCALE MRNA] (ISOFORMS 1 AND 2)</scope>
    <source>
        <tissue>Umbilical cord blood</tissue>
    </source>
</reference>
<reference key="3">
    <citation type="journal article" date="2006" name="Nature">
        <title>The DNA sequence and biological annotation of human chromosome 1.</title>
        <authorList>
            <person name="Gregory S.G."/>
            <person name="Barlow K.F."/>
            <person name="McLay K.E."/>
            <person name="Kaul R."/>
            <person name="Swarbreck D."/>
            <person name="Dunham A."/>
            <person name="Scott C.E."/>
            <person name="Howe K.L."/>
            <person name="Woodfine K."/>
            <person name="Spencer C.C.A."/>
            <person name="Jones M.C."/>
            <person name="Gillson C."/>
            <person name="Searle S."/>
            <person name="Zhou Y."/>
            <person name="Kokocinski F."/>
            <person name="McDonald L."/>
            <person name="Evans R."/>
            <person name="Phillips K."/>
            <person name="Atkinson A."/>
            <person name="Cooper R."/>
            <person name="Jones C."/>
            <person name="Hall R.E."/>
            <person name="Andrews T.D."/>
            <person name="Lloyd C."/>
            <person name="Ainscough R."/>
            <person name="Almeida J.P."/>
            <person name="Ambrose K.D."/>
            <person name="Anderson F."/>
            <person name="Andrew R.W."/>
            <person name="Ashwell R.I.S."/>
            <person name="Aubin K."/>
            <person name="Babbage A.K."/>
            <person name="Bagguley C.L."/>
            <person name="Bailey J."/>
            <person name="Beasley H."/>
            <person name="Bethel G."/>
            <person name="Bird C.P."/>
            <person name="Bray-Allen S."/>
            <person name="Brown J.Y."/>
            <person name="Brown A.J."/>
            <person name="Buckley D."/>
            <person name="Burton J."/>
            <person name="Bye J."/>
            <person name="Carder C."/>
            <person name="Chapman J.C."/>
            <person name="Clark S.Y."/>
            <person name="Clarke G."/>
            <person name="Clee C."/>
            <person name="Cobley V."/>
            <person name="Collier R.E."/>
            <person name="Corby N."/>
            <person name="Coville G.J."/>
            <person name="Davies J."/>
            <person name="Deadman R."/>
            <person name="Dunn M."/>
            <person name="Earthrowl M."/>
            <person name="Ellington A.G."/>
            <person name="Errington H."/>
            <person name="Frankish A."/>
            <person name="Frankland J."/>
            <person name="French L."/>
            <person name="Garner P."/>
            <person name="Garnett J."/>
            <person name="Gay L."/>
            <person name="Ghori M.R.J."/>
            <person name="Gibson R."/>
            <person name="Gilby L.M."/>
            <person name="Gillett W."/>
            <person name="Glithero R.J."/>
            <person name="Grafham D.V."/>
            <person name="Griffiths C."/>
            <person name="Griffiths-Jones S."/>
            <person name="Grocock R."/>
            <person name="Hammond S."/>
            <person name="Harrison E.S.I."/>
            <person name="Hart E."/>
            <person name="Haugen E."/>
            <person name="Heath P.D."/>
            <person name="Holmes S."/>
            <person name="Holt K."/>
            <person name="Howden P.J."/>
            <person name="Hunt A.R."/>
            <person name="Hunt S.E."/>
            <person name="Hunter G."/>
            <person name="Isherwood J."/>
            <person name="James R."/>
            <person name="Johnson C."/>
            <person name="Johnson D."/>
            <person name="Joy A."/>
            <person name="Kay M."/>
            <person name="Kershaw J.K."/>
            <person name="Kibukawa M."/>
            <person name="Kimberley A.M."/>
            <person name="King A."/>
            <person name="Knights A.J."/>
            <person name="Lad H."/>
            <person name="Laird G."/>
            <person name="Lawlor S."/>
            <person name="Leongamornlert D.A."/>
            <person name="Lloyd D.M."/>
            <person name="Loveland J."/>
            <person name="Lovell J."/>
            <person name="Lush M.J."/>
            <person name="Lyne R."/>
            <person name="Martin S."/>
            <person name="Mashreghi-Mohammadi M."/>
            <person name="Matthews L."/>
            <person name="Matthews N.S.W."/>
            <person name="McLaren S."/>
            <person name="Milne S."/>
            <person name="Mistry S."/>
            <person name="Moore M.J.F."/>
            <person name="Nickerson T."/>
            <person name="O'Dell C.N."/>
            <person name="Oliver K."/>
            <person name="Palmeiri A."/>
            <person name="Palmer S.A."/>
            <person name="Parker A."/>
            <person name="Patel D."/>
            <person name="Pearce A.V."/>
            <person name="Peck A.I."/>
            <person name="Pelan S."/>
            <person name="Phelps K."/>
            <person name="Phillimore B.J."/>
            <person name="Plumb R."/>
            <person name="Rajan J."/>
            <person name="Raymond C."/>
            <person name="Rouse G."/>
            <person name="Saenphimmachak C."/>
            <person name="Sehra H.K."/>
            <person name="Sheridan E."/>
            <person name="Shownkeen R."/>
            <person name="Sims S."/>
            <person name="Skuce C.D."/>
            <person name="Smith M."/>
            <person name="Steward C."/>
            <person name="Subramanian S."/>
            <person name="Sycamore N."/>
            <person name="Tracey A."/>
            <person name="Tromans A."/>
            <person name="Van Helmond Z."/>
            <person name="Wall M."/>
            <person name="Wallis J.M."/>
            <person name="White S."/>
            <person name="Whitehead S.L."/>
            <person name="Wilkinson J.E."/>
            <person name="Willey D.L."/>
            <person name="Williams H."/>
            <person name="Wilming L."/>
            <person name="Wray P.W."/>
            <person name="Wu Z."/>
            <person name="Coulson A."/>
            <person name="Vaudin M."/>
            <person name="Sulston J.E."/>
            <person name="Durbin R.M."/>
            <person name="Hubbard T."/>
            <person name="Wooster R."/>
            <person name="Dunham I."/>
            <person name="Carter N.P."/>
            <person name="McVean G."/>
            <person name="Ross M.T."/>
            <person name="Harrow J."/>
            <person name="Olson M.V."/>
            <person name="Beck S."/>
            <person name="Rogers J."/>
            <person name="Bentley D.R."/>
        </authorList>
    </citation>
    <scope>NUCLEOTIDE SEQUENCE [LARGE SCALE GENOMIC DNA]</scope>
</reference>
<reference key="4">
    <citation type="submission" date="2005-07" db="EMBL/GenBank/DDBJ databases">
        <authorList>
            <person name="Mural R.J."/>
            <person name="Istrail S."/>
            <person name="Sutton G."/>
            <person name="Florea L."/>
            <person name="Halpern A.L."/>
            <person name="Mobarry C.M."/>
            <person name="Lippert R."/>
            <person name="Walenz B."/>
            <person name="Shatkay H."/>
            <person name="Dew I."/>
            <person name="Miller J.R."/>
            <person name="Flanigan M.J."/>
            <person name="Edwards N.J."/>
            <person name="Bolanos R."/>
            <person name="Fasulo D."/>
            <person name="Halldorsson B.V."/>
            <person name="Hannenhalli S."/>
            <person name="Turner R."/>
            <person name="Yooseph S."/>
            <person name="Lu F."/>
            <person name="Nusskern D.R."/>
            <person name="Shue B.C."/>
            <person name="Zheng X.H."/>
            <person name="Zhong F."/>
            <person name="Delcher A.L."/>
            <person name="Huson D.H."/>
            <person name="Kravitz S.A."/>
            <person name="Mouchard L."/>
            <person name="Reinert K."/>
            <person name="Remington K.A."/>
            <person name="Clark A.G."/>
            <person name="Waterman M.S."/>
            <person name="Eichler E.E."/>
            <person name="Adams M.D."/>
            <person name="Hunkapiller M.W."/>
            <person name="Myers E.W."/>
            <person name="Venter J.C."/>
        </authorList>
    </citation>
    <scope>NUCLEOTIDE SEQUENCE [LARGE SCALE GENOMIC DNA]</scope>
</reference>
<reference key="5">
    <citation type="journal article" date="2004" name="Genome Res.">
        <title>The status, quality, and expansion of the NIH full-length cDNA project: the Mammalian Gene Collection (MGC).</title>
        <authorList>
            <consortium name="The MGC Project Team"/>
        </authorList>
    </citation>
    <scope>NUCLEOTIDE SEQUENCE [LARGE SCALE MRNA] (ISOFORM 1)</scope>
    <source>
        <tissue>Lung</tissue>
    </source>
</reference>
<reference key="6">
    <citation type="journal article" date="2009" name="Science">
        <title>Lysine acetylation targets protein complexes and co-regulates major cellular functions.</title>
        <authorList>
            <person name="Choudhary C."/>
            <person name="Kumar C."/>
            <person name="Gnad F."/>
            <person name="Nielsen M.L."/>
            <person name="Rehman M."/>
            <person name="Walther T.C."/>
            <person name="Olsen J.V."/>
            <person name="Mann M."/>
        </authorList>
    </citation>
    <scope>ACETYLATION [LARGE SCALE ANALYSIS] AT LYS-59 AND LYS-309</scope>
    <scope>IDENTIFICATION BY MASS SPECTROMETRY [LARGE SCALE ANALYSIS]</scope>
</reference>
<reference key="7">
    <citation type="journal article" date="2011" name="BMC Syst. Biol.">
        <title>Initial characterization of the human central proteome.</title>
        <authorList>
            <person name="Burkard T.R."/>
            <person name="Planyavsky M."/>
            <person name="Kaupe I."/>
            <person name="Breitwieser F.P."/>
            <person name="Buerckstuemmer T."/>
            <person name="Bennett K.L."/>
            <person name="Superti-Furga G."/>
            <person name="Colinge J."/>
        </authorList>
    </citation>
    <scope>IDENTIFICATION BY MASS SPECTROMETRY [LARGE SCALE ANALYSIS]</scope>
</reference>
<reference key="8">
    <citation type="journal article" date="2014" name="J. Proteomics">
        <title>An enzyme assisted RP-RPLC approach for in-depth analysis of human liver phosphoproteome.</title>
        <authorList>
            <person name="Bian Y."/>
            <person name="Song C."/>
            <person name="Cheng K."/>
            <person name="Dong M."/>
            <person name="Wang F."/>
            <person name="Huang J."/>
            <person name="Sun D."/>
            <person name="Wang L."/>
            <person name="Ye M."/>
            <person name="Zou H."/>
        </authorList>
    </citation>
    <scope>IDENTIFICATION BY MASS SPECTROMETRY [LARGE SCALE ANALYSIS]</scope>
    <source>
        <tissue>Liver</tissue>
    </source>
</reference>
<reference key="9">
    <citation type="submission" date="2009-09" db="PDB data bank">
        <title>Structure of human phosphogluconate dehydrogenase in complex with NADPH at 2.53 A.</title>
        <authorList>
            <consortium name="Structural genomics consortium (SGC)"/>
        </authorList>
    </citation>
    <scope>X-RAY CRYSTALLOGRAPHY (2.53 ANGSTROMS) IN COMPLEX WITH NADP</scope>
    <scope>SUBUNIT</scope>
</reference>
<name>6PGD_HUMAN</name>
<protein>
    <recommendedName>
        <fullName>6-phosphogluconate dehydrogenase, decarboxylating</fullName>
        <ecNumber>1.1.1.44</ecNumber>
    </recommendedName>
</protein>
<organism>
    <name type="scientific">Homo sapiens</name>
    <name type="common">Human</name>
    <dbReference type="NCBI Taxonomy" id="9606"/>
    <lineage>
        <taxon>Eukaryota</taxon>
        <taxon>Metazoa</taxon>
        <taxon>Chordata</taxon>
        <taxon>Craniata</taxon>
        <taxon>Vertebrata</taxon>
        <taxon>Euteleostomi</taxon>
        <taxon>Mammalia</taxon>
        <taxon>Eutheria</taxon>
        <taxon>Euarchontoglires</taxon>
        <taxon>Primates</taxon>
        <taxon>Haplorrhini</taxon>
        <taxon>Catarrhini</taxon>
        <taxon>Hominidae</taxon>
        <taxon>Homo</taxon>
    </lineage>
</organism>
<gene>
    <name type="primary">PGD</name>
    <name type="synonym">PGDH</name>
</gene>